<reference key="1">
    <citation type="journal article" date="1994" name="J. Biol. Chem.">
        <title>Isolation of a mouse Golgi mannosidase cDNA, a member of a gene family conserved from yeast to mammals.</title>
        <authorList>
            <person name="Herscovics A.A."/>
            <person name="Schneikert J."/>
            <person name="Athanassiadis A."/>
            <person name="Moremen K.W."/>
        </authorList>
    </citation>
    <scope>NUCLEOTIDE SEQUENCE [MRNA] (ISOFORM 1)</scope>
    <source>
        <strain>BALB/cJ</strain>
        <tissue>Fibroblast</tissue>
    </source>
</reference>
<reference key="2">
    <citation type="journal article" date="1997" name="Genomics">
        <title>Genomic organization and chromosomal mapping of the murine alpha 1,2-mannosidase IB involved in N-glycan maturation.</title>
        <authorList>
            <person name="Campbell-Dyke N."/>
            <person name="Athanassiadis A."/>
            <person name="Herscovics A."/>
        </authorList>
    </citation>
    <scope>NUCLEOTIDE SEQUENCE [GENOMIC DNA]</scope>
    <source>
        <strain>129/Ola</strain>
    </source>
</reference>
<reference key="3">
    <citation type="journal article" date="2005" name="Science">
        <title>The transcriptional landscape of the mammalian genome.</title>
        <authorList>
            <person name="Carninci P."/>
            <person name="Kasukawa T."/>
            <person name="Katayama S."/>
            <person name="Gough J."/>
            <person name="Frith M.C."/>
            <person name="Maeda N."/>
            <person name="Oyama R."/>
            <person name="Ravasi T."/>
            <person name="Lenhard B."/>
            <person name="Wells C."/>
            <person name="Kodzius R."/>
            <person name="Shimokawa K."/>
            <person name="Bajic V.B."/>
            <person name="Brenner S.E."/>
            <person name="Batalov S."/>
            <person name="Forrest A.R."/>
            <person name="Zavolan M."/>
            <person name="Davis M.J."/>
            <person name="Wilming L.G."/>
            <person name="Aidinis V."/>
            <person name="Allen J.E."/>
            <person name="Ambesi-Impiombato A."/>
            <person name="Apweiler R."/>
            <person name="Aturaliya R.N."/>
            <person name="Bailey T.L."/>
            <person name="Bansal M."/>
            <person name="Baxter L."/>
            <person name="Beisel K.W."/>
            <person name="Bersano T."/>
            <person name="Bono H."/>
            <person name="Chalk A.M."/>
            <person name="Chiu K.P."/>
            <person name="Choudhary V."/>
            <person name="Christoffels A."/>
            <person name="Clutterbuck D.R."/>
            <person name="Crowe M.L."/>
            <person name="Dalla E."/>
            <person name="Dalrymple B.P."/>
            <person name="de Bono B."/>
            <person name="Della Gatta G."/>
            <person name="di Bernardo D."/>
            <person name="Down T."/>
            <person name="Engstrom P."/>
            <person name="Fagiolini M."/>
            <person name="Faulkner G."/>
            <person name="Fletcher C.F."/>
            <person name="Fukushima T."/>
            <person name="Furuno M."/>
            <person name="Futaki S."/>
            <person name="Gariboldi M."/>
            <person name="Georgii-Hemming P."/>
            <person name="Gingeras T.R."/>
            <person name="Gojobori T."/>
            <person name="Green R.E."/>
            <person name="Gustincich S."/>
            <person name="Harbers M."/>
            <person name="Hayashi Y."/>
            <person name="Hensch T.K."/>
            <person name="Hirokawa N."/>
            <person name="Hill D."/>
            <person name="Huminiecki L."/>
            <person name="Iacono M."/>
            <person name="Ikeo K."/>
            <person name="Iwama A."/>
            <person name="Ishikawa T."/>
            <person name="Jakt M."/>
            <person name="Kanapin A."/>
            <person name="Katoh M."/>
            <person name="Kawasawa Y."/>
            <person name="Kelso J."/>
            <person name="Kitamura H."/>
            <person name="Kitano H."/>
            <person name="Kollias G."/>
            <person name="Krishnan S.P."/>
            <person name="Kruger A."/>
            <person name="Kummerfeld S.K."/>
            <person name="Kurochkin I.V."/>
            <person name="Lareau L.F."/>
            <person name="Lazarevic D."/>
            <person name="Lipovich L."/>
            <person name="Liu J."/>
            <person name="Liuni S."/>
            <person name="McWilliam S."/>
            <person name="Madan Babu M."/>
            <person name="Madera M."/>
            <person name="Marchionni L."/>
            <person name="Matsuda H."/>
            <person name="Matsuzawa S."/>
            <person name="Miki H."/>
            <person name="Mignone F."/>
            <person name="Miyake S."/>
            <person name="Morris K."/>
            <person name="Mottagui-Tabar S."/>
            <person name="Mulder N."/>
            <person name="Nakano N."/>
            <person name="Nakauchi H."/>
            <person name="Ng P."/>
            <person name="Nilsson R."/>
            <person name="Nishiguchi S."/>
            <person name="Nishikawa S."/>
            <person name="Nori F."/>
            <person name="Ohara O."/>
            <person name="Okazaki Y."/>
            <person name="Orlando V."/>
            <person name="Pang K.C."/>
            <person name="Pavan W.J."/>
            <person name="Pavesi G."/>
            <person name="Pesole G."/>
            <person name="Petrovsky N."/>
            <person name="Piazza S."/>
            <person name="Reed J."/>
            <person name="Reid J.F."/>
            <person name="Ring B.Z."/>
            <person name="Ringwald M."/>
            <person name="Rost B."/>
            <person name="Ruan Y."/>
            <person name="Salzberg S.L."/>
            <person name="Sandelin A."/>
            <person name="Schneider C."/>
            <person name="Schoenbach C."/>
            <person name="Sekiguchi K."/>
            <person name="Semple C.A."/>
            <person name="Seno S."/>
            <person name="Sessa L."/>
            <person name="Sheng Y."/>
            <person name="Shibata Y."/>
            <person name="Shimada H."/>
            <person name="Shimada K."/>
            <person name="Silva D."/>
            <person name="Sinclair B."/>
            <person name="Sperling S."/>
            <person name="Stupka E."/>
            <person name="Sugiura K."/>
            <person name="Sultana R."/>
            <person name="Takenaka Y."/>
            <person name="Taki K."/>
            <person name="Tammoja K."/>
            <person name="Tan S.L."/>
            <person name="Tang S."/>
            <person name="Taylor M.S."/>
            <person name="Tegner J."/>
            <person name="Teichmann S.A."/>
            <person name="Ueda H.R."/>
            <person name="van Nimwegen E."/>
            <person name="Verardo R."/>
            <person name="Wei C.L."/>
            <person name="Yagi K."/>
            <person name="Yamanishi H."/>
            <person name="Zabarovsky E."/>
            <person name="Zhu S."/>
            <person name="Zimmer A."/>
            <person name="Hide W."/>
            <person name="Bult C."/>
            <person name="Grimmond S.M."/>
            <person name="Teasdale R.D."/>
            <person name="Liu E.T."/>
            <person name="Brusic V."/>
            <person name="Quackenbush J."/>
            <person name="Wahlestedt C."/>
            <person name="Mattick J.S."/>
            <person name="Hume D.A."/>
            <person name="Kai C."/>
            <person name="Sasaki D."/>
            <person name="Tomaru Y."/>
            <person name="Fukuda S."/>
            <person name="Kanamori-Katayama M."/>
            <person name="Suzuki M."/>
            <person name="Aoki J."/>
            <person name="Arakawa T."/>
            <person name="Iida J."/>
            <person name="Imamura K."/>
            <person name="Itoh M."/>
            <person name="Kato T."/>
            <person name="Kawaji H."/>
            <person name="Kawagashira N."/>
            <person name="Kawashima T."/>
            <person name="Kojima M."/>
            <person name="Kondo S."/>
            <person name="Konno H."/>
            <person name="Nakano K."/>
            <person name="Ninomiya N."/>
            <person name="Nishio T."/>
            <person name="Okada M."/>
            <person name="Plessy C."/>
            <person name="Shibata K."/>
            <person name="Shiraki T."/>
            <person name="Suzuki S."/>
            <person name="Tagami M."/>
            <person name="Waki K."/>
            <person name="Watahiki A."/>
            <person name="Okamura-Oho Y."/>
            <person name="Suzuki H."/>
            <person name="Kawai J."/>
            <person name="Hayashizaki Y."/>
        </authorList>
    </citation>
    <scope>NUCLEOTIDE SEQUENCE [LARGE SCALE MRNA] (ISOFORM 1)</scope>
    <source>
        <strain>C57BL/6J</strain>
        <tissue>Bone marrow macrophage</tissue>
        <tissue>Hippocampus</tissue>
    </source>
</reference>
<reference key="4">
    <citation type="journal article" date="2009" name="PLoS Biol.">
        <title>Lineage-specific biology revealed by a finished genome assembly of the mouse.</title>
        <authorList>
            <person name="Church D.M."/>
            <person name="Goodstadt L."/>
            <person name="Hillier L.W."/>
            <person name="Zody M.C."/>
            <person name="Goldstein S."/>
            <person name="She X."/>
            <person name="Bult C.J."/>
            <person name="Agarwala R."/>
            <person name="Cherry J.L."/>
            <person name="DiCuccio M."/>
            <person name="Hlavina W."/>
            <person name="Kapustin Y."/>
            <person name="Meric P."/>
            <person name="Maglott D."/>
            <person name="Birtle Z."/>
            <person name="Marques A.C."/>
            <person name="Graves T."/>
            <person name="Zhou S."/>
            <person name="Teague B."/>
            <person name="Potamousis K."/>
            <person name="Churas C."/>
            <person name="Place M."/>
            <person name="Herschleb J."/>
            <person name="Runnheim R."/>
            <person name="Forrest D."/>
            <person name="Amos-Landgraf J."/>
            <person name="Schwartz D.C."/>
            <person name="Cheng Z."/>
            <person name="Lindblad-Toh K."/>
            <person name="Eichler E.E."/>
            <person name="Ponting C.P."/>
        </authorList>
    </citation>
    <scope>NUCLEOTIDE SEQUENCE [LARGE SCALE GENOMIC DNA]</scope>
    <source>
        <strain>NOD</strain>
    </source>
</reference>
<reference key="5">
    <citation type="journal article" date="2004" name="Genome Res.">
        <title>The status, quality, and expansion of the NIH full-length cDNA project: the Mammalian Gene Collection (MGC).</title>
        <authorList>
            <consortium name="The MGC Project Team"/>
        </authorList>
    </citation>
    <scope>NUCLEOTIDE SEQUENCE [LARGE SCALE MRNA] (ISOFORM 1)</scope>
    <source>
        <strain>C57BL/6J</strain>
        <tissue>Brain</tissue>
    </source>
</reference>
<reference key="6">
    <citation type="journal article" date="2010" name="Cell">
        <title>A tissue-specific atlas of mouse protein phosphorylation and expression.</title>
        <authorList>
            <person name="Huttlin E.L."/>
            <person name="Jedrychowski M.P."/>
            <person name="Elias J.E."/>
            <person name="Goswami T."/>
            <person name="Rad R."/>
            <person name="Beausoleil S.A."/>
            <person name="Villen J."/>
            <person name="Haas W."/>
            <person name="Sowa M.E."/>
            <person name="Gygi S.P."/>
        </authorList>
    </citation>
    <scope>IDENTIFICATION BY MASS SPECTROMETRY [LARGE SCALE ANALYSIS]</scope>
    <source>
        <tissue>Liver</tissue>
        <tissue>Lung</tissue>
        <tissue>Spleen</tissue>
        <tissue>Testis</tissue>
    </source>
</reference>
<comment type="function">
    <text>Involved in the maturation of Asn-linked oligosaccharides. Progressively trim alpha-1,2-linked mannose residues from Man(9)GlcNAc(2) to produce Man(5)GlcNAc(2).</text>
</comment>
<comment type="catalytic activity">
    <reaction evidence="4">
        <text>N(4)-(alpha-D-Man-(1-&gt;2)-alpha-D-Man-(1-&gt;2)-alpha-D-Man-(1-&gt;3)-[alpha-D-Man-(1-&gt;2)-alpha-D-Man-(1-&gt;3)-[alpha-D-Man-(1-&gt;2)-alpha-D-Man-(1-&gt;6)]-alpha-D-Man-(1-&gt;6)]-beta-D-Man-(1-&gt;4)-beta-D-GlcNAc-(1-&gt;4)-beta-D-GlcNAc)-L-asparaginyl-[protein] (N-glucan mannose isomer 9A1,2,3B1,2,3) + 4 H2O = N(4)-(alpha-D-Man-(1-&gt;3)-[alpha-D-Man-(1-&gt;3)-[alpha-D-Man-(1-&gt;6)]-alpha-D-Man-(1-&gt;6)]-beta-D-Man-(1-&gt;4)-beta-D-GlcNAc-(1-&gt;4)-beta-D-GlcNAc)-L-asparaginyl-[protein] (N-glucan mannose isomer 5A1,2) + 4 beta-D-mannose</text>
        <dbReference type="Rhea" id="RHEA:56008"/>
        <dbReference type="Rhea" id="RHEA-COMP:14356"/>
        <dbReference type="Rhea" id="RHEA-COMP:14367"/>
        <dbReference type="ChEBI" id="CHEBI:15377"/>
        <dbReference type="ChEBI" id="CHEBI:28563"/>
        <dbReference type="ChEBI" id="CHEBI:59087"/>
        <dbReference type="ChEBI" id="CHEBI:139493"/>
        <dbReference type="EC" id="3.2.1.113"/>
    </reaction>
</comment>
<comment type="catalytic activity">
    <reaction evidence="4">
        <text>N(4)-(alpha-D-Man-(1-&gt;2)-alpha-D-Man-(1-&gt;2)-alpha-D-Man-(1-&gt;3)-[alpha-D-Man-(1-&gt;3)-[alpha-D-Man-(1-&gt;2)-alpha-D-Man-(1-&gt;6)]-alpha-D-Man-(1-&gt;6)]-beta-D-Man-(1-&gt;4)-beta-D-GlcNAc-(1-&gt;4)-beta-D-GlcNAc)-L-asparaginyl-[protein] (N-glucan mannose isomer 8A1,2,3B1,3) + 3 H2O = N(4)-(alpha-D-Man-(1-&gt;3)-[alpha-D-Man-(1-&gt;3)-[alpha-D-Man-(1-&gt;6)]-alpha-D-Man-(1-&gt;6)]-beta-D-Man-(1-&gt;4)-beta-D-GlcNAc-(1-&gt;4)-beta-D-GlcNAc)-L-asparaginyl-[protein] (N-glucan mannose isomer 5A1,2) + 3 beta-D-mannose</text>
        <dbReference type="Rhea" id="RHEA:56028"/>
        <dbReference type="Rhea" id="RHEA-COMP:14358"/>
        <dbReference type="Rhea" id="RHEA-COMP:14367"/>
        <dbReference type="ChEBI" id="CHEBI:15377"/>
        <dbReference type="ChEBI" id="CHEBI:28563"/>
        <dbReference type="ChEBI" id="CHEBI:59087"/>
        <dbReference type="ChEBI" id="CHEBI:60628"/>
        <dbReference type="EC" id="3.2.1.113"/>
    </reaction>
</comment>
<comment type="cofactor">
    <cofactor evidence="5">
        <name>Ca(2+)</name>
        <dbReference type="ChEBI" id="CHEBI:29108"/>
    </cofactor>
</comment>
<comment type="activity regulation">
    <text evidence="1">Inhibited by both 1-deoxymannojirimycin and kifunensine.</text>
</comment>
<comment type="pathway">
    <text evidence="4">Protein modification; protein glycosylation.</text>
</comment>
<comment type="subcellular location">
    <subcellularLocation>
        <location>Golgi apparatus membrane</location>
        <topology>Single-pass type II membrane protein</topology>
    </subcellularLocation>
</comment>
<comment type="alternative products">
    <event type="alternative splicing"/>
    <isoform>
        <id>P39098-1</id>
        <name>1</name>
        <sequence type="displayed"/>
    </isoform>
    <isoform>
        <id>P39098-2</id>
        <name>2</name>
        <sequence type="described" ref="VSP_018615"/>
    </isoform>
</comment>
<comment type="similarity">
    <text evidence="7">Belongs to the glycosyl hydrolase 47 family.</text>
</comment>
<sequence length="641" mass="72871">MTTPALLPLSGRRIPPLNLGPPSFPHHRATLRLSEKFILLLILSAFITLCFGAFFFLPDSSKHKRFDLGLEDVLIPHVDAGKGAKNPGVFLIHGPDEHRHREEEERLRNKIRADHEKALEEAKEKLRKSREEIRAEIQTEKNKVAQAMKTKETRVLPPVPVPQRVGVSGGDPEDMEIKKKRDKIKEMMKHAWDNYRTYGWGHNELRPIARKGHSTNIFGSSQMGATIVDALDTLYIMGLHDEFMDGQRWIEENLDFSVNSEVSVFEVNIRFIGGLLAAYYLSGEEIFKTKAVQLAEKLLPAFNTPTGIPWAMVNLKSGVGRNWGWASAGSSILAEFGTLHMEFVHLSYLTGDLTYYNKVMHIRKLLQKMERPNGLYPNYLNPRTGRWGQYHTSVGGLGDSFYEYLLKAWLMSDKTDHEARRMYDDAVEAIEKHLIKKSRGGLVFIGEWKNGHLERKMGHLACFAGGMFALGADGSRKDKAGHYLELGAEIARTCHESYDRTALKLGPESFKFDGAVEAVAVRQAEKYYILRPEVIETYWYLWRFTHDPRYRQWGWEAALAIEKSCRVSGGFSGVKDVYAPTPVHDDVQQSFFLAETLKYLYLLFSGDDLLPLDHWVFNTEAHPLPVLRLANSTLSGNPAVR</sequence>
<proteinExistence type="evidence at protein level"/>
<name>MA1A2_MOUSE</name>
<dbReference type="EC" id="3.2.1.113" evidence="4"/>
<dbReference type="EMBL" id="U03458">
    <property type="protein sequence ID" value="AAB60439.1"/>
    <property type="molecule type" value="mRNA"/>
</dbReference>
<dbReference type="EMBL" id="U03457">
    <property type="protein sequence ID" value="AAB60438.1"/>
    <property type="molecule type" value="mRNA"/>
</dbReference>
<dbReference type="EMBL" id="AF078095">
    <property type="protein sequence ID" value="AAC34829.1"/>
    <property type="molecule type" value="Genomic_DNA"/>
</dbReference>
<dbReference type="EMBL" id="AF078083">
    <property type="protein sequence ID" value="AAC34829.1"/>
    <property type="status" value="JOINED"/>
    <property type="molecule type" value="Genomic_DNA"/>
</dbReference>
<dbReference type="EMBL" id="AF078084">
    <property type="protein sequence ID" value="AAC34829.1"/>
    <property type="status" value="JOINED"/>
    <property type="molecule type" value="Genomic_DNA"/>
</dbReference>
<dbReference type="EMBL" id="AF078085">
    <property type="protein sequence ID" value="AAC34829.1"/>
    <property type="status" value="JOINED"/>
    <property type="molecule type" value="Genomic_DNA"/>
</dbReference>
<dbReference type="EMBL" id="AF078086">
    <property type="protein sequence ID" value="AAC34829.1"/>
    <property type="status" value="JOINED"/>
    <property type="molecule type" value="Genomic_DNA"/>
</dbReference>
<dbReference type="EMBL" id="AF078087">
    <property type="protein sequence ID" value="AAC34829.1"/>
    <property type="status" value="JOINED"/>
    <property type="molecule type" value="Genomic_DNA"/>
</dbReference>
<dbReference type="EMBL" id="AF078088">
    <property type="protein sequence ID" value="AAC34829.1"/>
    <property type="status" value="JOINED"/>
    <property type="molecule type" value="Genomic_DNA"/>
</dbReference>
<dbReference type="EMBL" id="AF078089">
    <property type="protein sequence ID" value="AAC34829.1"/>
    <property type="status" value="JOINED"/>
    <property type="molecule type" value="Genomic_DNA"/>
</dbReference>
<dbReference type="EMBL" id="AF078090">
    <property type="protein sequence ID" value="AAC34829.1"/>
    <property type="status" value="JOINED"/>
    <property type="molecule type" value="Genomic_DNA"/>
</dbReference>
<dbReference type="EMBL" id="AF078091">
    <property type="protein sequence ID" value="AAC34829.1"/>
    <property type="status" value="JOINED"/>
    <property type="molecule type" value="Genomic_DNA"/>
</dbReference>
<dbReference type="EMBL" id="AF078092">
    <property type="protein sequence ID" value="AAC34829.1"/>
    <property type="status" value="JOINED"/>
    <property type="molecule type" value="Genomic_DNA"/>
</dbReference>
<dbReference type="EMBL" id="AF078093">
    <property type="protein sequence ID" value="AAC34829.1"/>
    <property type="status" value="JOINED"/>
    <property type="molecule type" value="Genomic_DNA"/>
</dbReference>
<dbReference type="EMBL" id="AF078094">
    <property type="protein sequence ID" value="AAC34829.1"/>
    <property type="status" value="JOINED"/>
    <property type="molecule type" value="Genomic_DNA"/>
</dbReference>
<dbReference type="EMBL" id="AK013515">
    <property type="protein sequence ID" value="BAB28892.3"/>
    <property type="molecule type" value="mRNA"/>
</dbReference>
<dbReference type="EMBL" id="AK153336">
    <property type="protein sequence ID" value="BAE31915.1"/>
    <property type="molecule type" value="mRNA"/>
</dbReference>
<dbReference type="EMBL" id="AL645760">
    <property type="status" value="NOT_ANNOTATED_CDS"/>
    <property type="molecule type" value="Genomic_DNA"/>
</dbReference>
<dbReference type="EMBL" id="BC049121">
    <property type="protein sequence ID" value="AAH49121.1"/>
    <property type="molecule type" value="mRNA"/>
</dbReference>
<dbReference type="EMBL" id="BC068192">
    <property type="protein sequence ID" value="AAH68192.1"/>
    <property type="molecule type" value="mRNA"/>
</dbReference>
<dbReference type="CCDS" id="CCDS17676.1">
    <molecule id="P39098-1"/>
</dbReference>
<dbReference type="PIR" id="A54407">
    <property type="entry name" value="A54407"/>
</dbReference>
<dbReference type="RefSeq" id="NP_034893.1">
    <molecule id="P39098-1"/>
    <property type="nucleotide sequence ID" value="NM_010763.2"/>
</dbReference>
<dbReference type="SMR" id="P39098"/>
<dbReference type="BioGRID" id="201303">
    <property type="interactions" value="4"/>
</dbReference>
<dbReference type="FunCoup" id="P39098">
    <property type="interactions" value="3116"/>
</dbReference>
<dbReference type="STRING" id="10090.ENSMUSP00000008907"/>
<dbReference type="CAZy" id="GH47">
    <property type="family name" value="Glycoside Hydrolase Family 47"/>
</dbReference>
<dbReference type="GlyCosmos" id="P39098">
    <property type="glycosylation" value="1 site, No reported glycans"/>
</dbReference>
<dbReference type="GlyGen" id="P39098">
    <property type="glycosylation" value="1 site, 1 N-linked glycan (1 site)"/>
</dbReference>
<dbReference type="iPTMnet" id="P39098"/>
<dbReference type="PhosphoSitePlus" id="P39098"/>
<dbReference type="PaxDb" id="10090-ENSMUSP00000008907"/>
<dbReference type="PeptideAtlas" id="P39098"/>
<dbReference type="ProteomicsDB" id="252705">
    <molecule id="P39098-1"/>
</dbReference>
<dbReference type="ProteomicsDB" id="252706">
    <molecule id="P39098-2"/>
</dbReference>
<dbReference type="Pumba" id="P39098"/>
<dbReference type="Antibodypedia" id="33890">
    <property type="antibodies" value="96 antibodies from 25 providers"/>
</dbReference>
<dbReference type="DNASU" id="17156"/>
<dbReference type="Ensembl" id="ENSMUST00000008907.14">
    <molecule id="P39098-1"/>
    <property type="protein sequence ID" value="ENSMUSP00000008907.8"/>
    <property type="gene ID" value="ENSMUSG00000008763.17"/>
</dbReference>
<dbReference type="GeneID" id="17156"/>
<dbReference type="KEGG" id="mmu:17156"/>
<dbReference type="UCSC" id="uc008qqw.3">
    <molecule id="P39098-1"/>
    <property type="organism name" value="mouse"/>
</dbReference>
<dbReference type="AGR" id="MGI:104676"/>
<dbReference type="CTD" id="10905"/>
<dbReference type="MGI" id="MGI:104676">
    <property type="gene designation" value="Man1a2"/>
</dbReference>
<dbReference type="VEuPathDB" id="HostDB:ENSMUSG00000008763"/>
<dbReference type="eggNOG" id="KOG2204">
    <property type="taxonomic scope" value="Eukaryota"/>
</dbReference>
<dbReference type="GeneTree" id="ENSGT00940000157498"/>
<dbReference type="HOGENOM" id="CLU_003818_3_2_1"/>
<dbReference type="InParanoid" id="P39098"/>
<dbReference type="OMA" id="PESFGWD"/>
<dbReference type="OrthoDB" id="8118055at2759"/>
<dbReference type="PhylomeDB" id="P39098"/>
<dbReference type="TreeFam" id="TF313420"/>
<dbReference type="BRENDA" id="3.2.1.113">
    <property type="organism ID" value="3474"/>
</dbReference>
<dbReference type="BRENDA" id="3.2.1.209">
    <property type="organism ID" value="3474"/>
</dbReference>
<dbReference type="Reactome" id="R-MMU-964827">
    <property type="pathway name" value="Progressive trimming of alpha-1,2-linked mannose residues from Man9/8/7GlcNAc2 to produce Man5GlcNAc2"/>
</dbReference>
<dbReference type="UniPathway" id="UPA00378"/>
<dbReference type="BioGRID-ORCS" id="17156">
    <property type="hits" value="11 hits in 77 CRISPR screens"/>
</dbReference>
<dbReference type="ChiTaRS" id="Man1a2">
    <property type="organism name" value="mouse"/>
</dbReference>
<dbReference type="PRO" id="PR:P39098"/>
<dbReference type="Proteomes" id="UP000000589">
    <property type="component" value="Chromosome 3"/>
</dbReference>
<dbReference type="RNAct" id="P39098">
    <property type="molecule type" value="protein"/>
</dbReference>
<dbReference type="Bgee" id="ENSMUSG00000008763">
    <property type="expression patterns" value="Expressed in undifferentiated genital tubercle and 262 other cell types or tissues"/>
</dbReference>
<dbReference type="ExpressionAtlas" id="P39098">
    <property type="expression patterns" value="baseline and differential"/>
</dbReference>
<dbReference type="GO" id="GO:0000139">
    <property type="term" value="C:Golgi membrane"/>
    <property type="evidence" value="ECO:0000314"/>
    <property type="project" value="MGI"/>
</dbReference>
<dbReference type="GO" id="GO:0005509">
    <property type="term" value="F:calcium ion binding"/>
    <property type="evidence" value="ECO:0007669"/>
    <property type="project" value="InterPro"/>
</dbReference>
<dbReference type="GO" id="GO:0004571">
    <property type="term" value="F:mannosyl-oligosaccharide 1,2-alpha-mannosidase activity"/>
    <property type="evidence" value="ECO:0007669"/>
    <property type="project" value="UniProtKB-EC"/>
</dbReference>
<dbReference type="GO" id="GO:0005975">
    <property type="term" value="P:carbohydrate metabolic process"/>
    <property type="evidence" value="ECO:0007669"/>
    <property type="project" value="InterPro"/>
</dbReference>
<dbReference type="GO" id="GO:0009100">
    <property type="term" value="P:glycoprotein metabolic process"/>
    <property type="evidence" value="ECO:0000315"/>
    <property type="project" value="MGI"/>
</dbReference>
<dbReference type="GO" id="GO:0048286">
    <property type="term" value="P:lung alveolus development"/>
    <property type="evidence" value="ECO:0000315"/>
    <property type="project" value="MGI"/>
</dbReference>
<dbReference type="GO" id="GO:0006486">
    <property type="term" value="P:protein glycosylation"/>
    <property type="evidence" value="ECO:0007669"/>
    <property type="project" value="UniProtKB-UniPathway"/>
</dbReference>
<dbReference type="GO" id="GO:0007585">
    <property type="term" value="P:respiratory gaseous exchange by respiratory system"/>
    <property type="evidence" value="ECO:0000315"/>
    <property type="project" value="MGI"/>
</dbReference>
<dbReference type="FunFam" id="1.50.10.10:FF:000002">
    <property type="entry name" value="alpha-1,2-Mannosidase"/>
    <property type="match status" value="1"/>
</dbReference>
<dbReference type="Gene3D" id="1.50.10.10">
    <property type="match status" value="1"/>
</dbReference>
<dbReference type="InterPro" id="IPR012341">
    <property type="entry name" value="6hp_glycosidase-like_sf"/>
</dbReference>
<dbReference type="InterPro" id="IPR001382">
    <property type="entry name" value="Glyco_hydro_47"/>
</dbReference>
<dbReference type="InterPro" id="IPR050749">
    <property type="entry name" value="Glycosyl_Hydrolase_47"/>
</dbReference>
<dbReference type="InterPro" id="IPR036026">
    <property type="entry name" value="Seven-hairpin_glycosidases"/>
</dbReference>
<dbReference type="PANTHER" id="PTHR11742:SF40">
    <property type="entry name" value="MANNOSYL-OLIGOSACCHARIDE 1,2-ALPHA-MANNOSIDASE IB"/>
    <property type="match status" value="1"/>
</dbReference>
<dbReference type="PANTHER" id="PTHR11742">
    <property type="entry name" value="MANNOSYL-OLIGOSACCHARIDE ALPHA-1,2-MANNOSIDASE-RELATED"/>
    <property type="match status" value="1"/>
</dbReference>
<dbReference type="Pfam" id="PF01532">
    <property type="entry name" value="Glyco_hydro_47"/>
    <property type="match status" value="1"/>
</dbReference>
<dbReference type="PRINTS" id="PR00747">
    <property type="entry name" value="GLYHDRLASE47"/>
</dbReference>
<dbReference type="SUPFAM" id="SSF48225">
    <property type="entry name" value="Seven-hairpin glycosidases"/>
    <property type="match status" value="1"/>
</dbReference>
<evidence type="ECO:0000250" key="1"/>
<evidence type="ECO:0000250" key="2">
    <source>
        <dbReference type="UniProtKB" id="O60476"/>
    </source>
</evidence>
<evidence type="ECO:0000250" key="3">
    <source>
        <dbReference type="UniProtKB" id="P31723"/>
    </source>
</evidence>
<evidence type="ECO:0000250" key="4">
    <source>
        <dbReference type="UniProtKB" id="P32906"/>
    </source>
</evidence>
<evidence type="ECO:0000250" key="5">
    <source>
        <dbReference type="UniProtKB" id="P45700"/>
    </source>
</evidence>
<evidence type="ECO:0000255" key="6"/>
<evidence type="ECO:0000305" key="7"/>
<organism>
    <name type="scientific">Mus musculus</name>
    <name type="common">Mouse</name>
    <dbReference type="NCBI Taxonomy" id="10090"/>
    <lineage>
        <taxon>Eukaryota</taxon>
        <taxon>Metazoa</taxon>
        <taxon>Chordata</taxon>
        <taxon>Craniata</taxon>
        <taxon>Vertebrata</taxon>
        <taxon>Euteleostomi</taxon>
        <taxon>Mammalia</taxon>
        <taxon>Eutheria</taxon>
        <taxon>Euarchontoglires</taxon>
        <taxon>Glires</taxon>
        <taxon>Rodentia</taxon>
        <taxon>Myomorpha</taxon>
        <taxon>Muroidea</taxon>
        <taxon>Muridae</taxon>
        <taxon>Murinae</taxon>
        <taxon>Mus</taxon>
        <taxon>Mus</taxon>
    </lineage>
</organism>
<feature type="initiator methionine" description="Removed" evidence="2">
    <location>
        <position position="1"/>
    </location>
</feature>
<feature type="chain" id="PRO_0000210313" description="Mannosyl-oligosaccharide 1,2-alpha-mannosidase IB">
    <location>
        <begin position="2"/>
        <end position="641"/>
    </location>
</feature>
<feature type="topological domain" description="Cytoplasmic" evidence="6">
    <location>
        <begin position="2"/>
        <end position="36"/>
    </location>
</feature>
<feature type="transmembrane region" description="Helical; Signal-anchor for type II membrane protein" evidence="6">
    <location>
        <begin position="37"/>
        <end position="57"/>
    </location>
</feature>
<feature type="topological domain" description="Lumenal" evidence="6">
    <location>
        <begin position="58"/>
        <end position="641"/>
    </location>
</feature>
<feature type="active site" description="Proton donor" evidence="3">
    <location>
        <position position="508"/>
    </location>
</feature>
<feature type="binding site" evidence="4">
    <location>
        <position position="619"/>
    </location>
    <ligand>
        <name>Ca(2+)</name>
        <dbReference type="ChEBI" id="CHEBI:29108"/>
    </ligand>
</feature>
<feature type="modified residue" description="N-acetylthreonine" evidence="2">
    <location>
        <position position="2"/>
    </location>
</feature>
<feature type="glycosylation site" description="N-linked (GlcNAc...) asparagine" evidence="6">
    <location>
        <position position="631"/>
    </location>
</feature>
<feature type="disulfide bond" evidence="4">
    <location>
        <begin position="462"/>
        <end position="494"/>
    </location>
</feature>
<feature type="splice variant" id="VSP_018615" description="In isoform 2." evidence="7">
    <location>
        <begin position="259"/>
        <end position="285"/>
    </location>
</feature>
<feature type="sequence conflict" description="In Ref. 1; AAB60438." evidence="7" ref="1">
    <original>M</original>
    <variation>T</variation>
    <location>
        <position position="411"/>
    </location>
</feature>
<feature type="sequence conflict" description="In Ref. 1; AAB60438." evidence="7" ref="1">
    <original>F</original>
    <variation>L</variation>
    <location>
        <position position="468"/>
    </location>
</feature>
<feature type="sequence conflict" description="In Ref. 1; AAB60438." evidence="7" ref="1">
    <original>F</original>
    <variation>S</variation>
    <location>
        <position position="592"/>
    </location>
</feature>
<gene>
    <name type="primary">Man1a2</name>
    <name type="synonym">Man1b</name>
</gene>
<protein>
    <recommendedName>
        <fullName>Mannosyl-oligosaccharide 1,2-alpha-mannosidase IB</fullName>
        <ecNumber evidence="4">3.2.1.113</ecNumber>
    </recommendedName>
    <alternativeName>
        <fullName>Mannosidase alpha class 1A member 2</fullName>
    </alternativeName>
    <alternativeName>
        <fullName>Processing alpha-1,2-mannosidase IB</fullName>
        <shortName>Alpha-1,2-mannosidase IB</shortName>
    </alternativeName>
</protein>
<accession>P39098</accession>
<accession>Q5SUY6</accession>
<accession>Q5SUY7</accession>
<accession>Q60599</accession>
<accession>Q9CUY9</accession>
<keyword id="KW-0007">Acetylation</keyword>
<keyword id="KW-0025">Alternative splicing</keyword>
<keyword id="KW-0106">Calcium</keyword>
<keyword id="KW-1015">Disulfide bond</keyword>
<keyword id="KW-0325">Glycoprotein</keyword>
<keyword id="KW-0326">Glycosidase</keyword>
<keyword id="KW-0333">Golgi apparatus</keyword>
<keyword id="KW-0378">Hydrolase</keyword>
<keyword id="KW-0472">Membrane</keyword>
<keyword id="KW-0479">Metal-binding</keyword>
<keyword id="KW-1185">Reference proteome</keyword>
<keyword id="KW-0735">Signal-anchor</keyword>
<keyword id="KW-0812">Transmembrane</keyword>
<keyword id="KW-1133">Transmembrane helix</keyword>